<evidence type="ECO:0000256" key="1">
    <source>
        <dbReference type="SAM" id="MobiDB-lite"/>
    </source>
</evidence>
<evidence type="ECO:0000269" key="2">
    <source>
    </source>
</evidence>
<evidence type="ECO:0000269" key="3">
    <source>
    </source>
</evidence>
<evidence type="ECO:0000303" key="4">
    <source>
    </source>
</evidence>
<evidence type="ECO:0000305" key="5"/>
<evidence type="ECO:0000305" key="6">
    <source>
    </source>
</evidence>
<evidence type="ECO:0007744" key="7">
    <source>
        <dbReference type="PDB" id="6YWS"/>
    </source>
</evidence>
<evidence type="ECO:0007744" key="8">
    <source>
        <dbReference type="PDB" id="6YWV"/>
    </source>
</evidence>
<comment type="function">
    <text evidence="6">Component of the mitochondrial ribosome (mitoribosome), a dedicated translation machinery responsible for the synthesis of mitochondrial genome-encoded proteins, including at least some of the essential transmembrane subunits of the mitochondrial respiratory chain. The mitoribosomes are attached to the mitochondrial inner membrane and translation products are cotranslationally integrated into the membrane.</text>
</comment>
<comment type="subunit">
    <text evidence="2 3">Component of the mitochondrial large ribosomal subunit (mt-LSU). Mature N.crassa 74S mitochondrial ribosomes consist of a small (37S) and a large (54S) subunit. The 37S small subunit contains a 16S ribosomal RNA (16S mt-rRNA) and 32 different proteins. The 54S large subunit contains a 23S rRNA (23S mt-rRNA) and 42 different proteins. Unlike bacterial L5, uL5m does not bind zinc.</text>
</comment>
<comment type="subcellular location">
    <subcellularLocation>
        <location evidence="2 3">Mitochondrion</location>
    </subcellularLocation>
</comment>
<comment type="similarity">
    <text evidence="5">Belongs to the universal ribosomal protein uL5 family.</text>
</comment>
<reference key="1">
    <citation type="journal article" date="2003" name="Nature">
        <title>The genome sequence of the filamentous fungus Neurospora crassa.</title>
        <authorList>
            <person name="Galagan J.E."/>
            <person name="Calvo S.E."/>
            <person name="Borkovich K.A."/>
            <person name="Selker E.U."/>
            <person name="Read N.D."/>
            <person name="Jaffe D.B."/>
            <person name="FitzHugh W."/>
            <person name="Ma L.-J."/>
            <person name="Smirnov S."/>
            <person name="Purcell S."/>
            <person name="Rehman B."/>
            <person name="Elkins T."/>
            <person name="Engels R."/>
            <person name="Wang S."/>
            <person name="Nielsen C.B."/>
            <person name="Butler J."/>
            <person name="Endrizzi M."/>
            <person name="Qui D."/>
            <person name="Ianakiev P."/>
            <person name="Bell-Pedersen D."/>
            <person name="Nelson M.A."/>
            <person name="Werner-Washburne M."/>
            <person name="Selitrennikoff C.P."/>
            <person name="Kinsey J.A."/>
            <person name="Braun E.L."/>
            <person name="Zelter A."/>
            <person name="Schulte U."/>
            <person name="Kothe G.O."/>
            <person name="Jedd G."/>
            <person name="Mewes H.-W."/>
            <person name="Staben C."/>
            <person name="Marcotte E."/>
            <person name="Greenberg D."/>
            <person name="Roy A."/>
            <person name="Foley K."/>
            <person name="Naylor J."/>
            <person name="Stange-Thomann N."/>
            <person name="Barrett R."/>
            <person name="Gnerre S."/>
            <person name="Kamal M."/>
            <person name="Kamvysselis M."/>
            <person name="Mauceli E.W."/>
            <person name="Bielke C."/>
            <person name="Rudd S."/>
            <person name="Frishman D."/>
            <person name="Krystofova S."/>
            <person name="Rasmussen C."/>
            <person name="Metzenberg R.L."/>
            <person name="Perkins D.D."/>
            <person name="Kroken S."/>
            <person name="Cogoni C."/>
            <person name="Macino G."/>
            <person name="Catcheside D.E.A."/>
            <person name="Li W."/>
            <person name="Pratt R.J."/>
            <person name="Osmani S.A."/>
            <person name="DeSouza C.P.C."/>
            <person name="Glass N.L."/>
            <person name="Orbach M.J."/>
            <person name="Berglund J.A."/>
            <person name="Voelker R."/>
            <person name="Yarden O."/>
            <person name="Plamann M."/>
            <person name="Seiler S."/>
            <person name="Dunlap J.C."/>
            <person name="Radford A."/>
            <person name="Aramayo R."/>
            <person name="Natvig D.O."/>
            <person name="Alex L.A."/>
            <person name="Mannhaupt G."/>
            <person name="Ebbole D.J."/>
            <person name="Freitag M."/>
            <person name="Paulsen I."/>
            <person name="Sachs M.S."/>
            <person name="Lander E.S."/>
            <person name="Nusbaum C."/>
            <person name="Birren B.W."/>
        </authorList>
    </citation>
    <scope>NUCLEOTIDE SEQUENCE [LARGE SCALE GENOMIC DNA]</scope>
    <source>
        <strain>ATCC 24698 / 74-OR23-1A / CBS 708.71 / DSM 1257 / FGSC 987</strain>
    </source>
</reference>
<reference key="2">
    <citation type="journal article" date="2006" name="FEMS Microbiol. Lett.">
        <title>Identification and comparative analysis of the large subunit mitochondrial ribosomal proteins of Neurospora crassa.</title>
        <authorList>
            <person name="Gan X."/>
            <person name="Arita K."/>
            <person name="Isono S."/>
            <person name="Kitakawa M."/>
            <person name="Yoshino K."/>
            <person name="Yonezawa K."/>
            <person name="Kato A."/>
            <person name="Inoue H."/>
            <person name="Isono K."/>
        </authorList>
    </citation>
    <scope>IDENTIFICATION IN THE MITOCHONDRIAL RIBOSOMAL LARGE COMPLEX</scope>
    <scope>IDENTIFICATION BY MASS SPECTROMETRY</scope>
</reference>
<reference evidence="7 8" key="3">
    <citation type="journal article" date="2020" name="Nat. Commun.">
        <title>Analysis of translating mitoribosome reveals functional characteristics of translation in mitochondria of fungi.</title>
        <authorList>
            <person name="Itoh Y."/>
            <person name="Naschberger A."/>
            <person name="Mortezaei N."/>
            <person name="Herrmann J.M."/>
            <person name="Amunts A."/>
        </authorList>
    </citation>
    <scope>STRUCTURE BY ELECTRON MICROSCOPY (2.74 ANGSTROMS)</scope>
</reference>
<dbReference type="EMBL" id="CM002240">
    <property type="protein sequence ID" value="EAA31493.1"/>
    <property type="molecule type" value="Genomic_DNA"/>
</dbReference>
<dbReference type="RefSeq" id="XP_960729.1">
    <property type="nucleotide sequence ID" value="XM_955636.2"/>
</dbReference>
<dbReference type="PDB" id="6YWS">
    <property type="method" value="EM"/>
    <property type="resolution" value="2.74 A"/>
    <property type="chains" value="E=1-352"/>
</dbReference>
<dbReference type="PDB" id="6YWV">
    <property type="method" value="EM"/>
    <property type="resolution" value="3.03 A"/>
    <property type="chains" value="E=1-352"/>
</dbReference>
<dbReference type="PDB" id="6YWX">
    <property type="method" value="EM"/>
    <property type="resolution" value="3.10 A"/>
    <property type="chains" value="E=1-352"/>
</dbReference>
<dbReference type="PDBsum" id="6YWS"/>
<dbReference type="PDBsum" id="6YWV"/>
<dbReference type="PDBsum" id="6YWX"/>
<dbReference type="EMDB" id="EMD-10973"/>
<dbReference type="EMDB" id="EMD-10977"/>
<dbReference type="EMDB" id="EMD-10978"/>
<dbReference type="SMR" id="Q1K6P0"/>
<dbReference type="FunCoup" id="Q1K6P0">
    <property type="interactions" value="577"/>
</dbReference>
<dbReference type="STRING" id="367110.Q1K6P0"/>
<dbReference type="PaxDb" id="5141-EFNCRP00000003874"/>
<dbReference type="EnsemblFungi" id="EAA31493">
    <property type="protein sequence ID" value="EAA31493"/>
    <property type="gene ID" value="NCU04171"/>
</dbReference>
<dbReference type="GeneID" id="3876877"/>
<dbReference type="KEGG" id="ncr:NCU04171"/>
<dbReference type="VEuPathDB" id="FungiDB:NCU04171"/>
<dbReference type="HOGENOM" id="CLU_061015_1_0_1"/>
<dbReference type="InParanoid" id="Q1K6P0"/>
<dbReference type="OMA" id="HITIHTT"/>
<dbReference type="OrthoDB" id="539541at2759"/>
<dbReference type="Proteomes" id="UP000001805">
    <property type="component" value="Chromosome 2, Linkage Group V"/>
</dbReference>
<dbReference type="GO" id="GO:0022625">
    <property type="term" value="C:cytosolic large ribosomal subunit"/>
    <property type="evidence" value="ECO:0000318"/>
    <property type="project" value="GO_Central"/>
</dbReference>
<dbReference type="GO" id="GO:0005739">
    <property type="term" value="C:mitochondrion"/>
    <property type="evidence" value="ECO:0007669"/>
    <property type="project" value="UniProtKB-SubCell"/>
</dbReference>
<dbReference type="GO" id="GO:0003723">
    <property type="term" value="F:RNA binding"/>
    <property type="evidence" value="ECO:0000318"/>
    <property type="project" value="GO_Central"/>
</dbReference>
<dbReference type="GO" id="GO:0003735">
    <property type="term" value="F:structural constituent of ribosome"/>
    <property type="evidence" value="ECO:0000318"/>
    <property type="project" value="GO_Central"/>
</dbReference>
<dbReference type="GO" id="GO:0006412">
    <property type="term" value="P:translation"/>
    <property type="evidence" value="ECO:0000318"/>
    <property type="project" value="GO_Central"/>
</dbReference>
<dbReference type="FunFam" id="3.30.1440.10:FF:000001">
    <property type="entry name" value="50S ribosomal protein L5"/>
    <property type="match status" value="1"/>
</dbReference>
<dbReference type="Gene3D" id="3.30.1440.10">
    <property type="match status" value="1"/>
</dbReference>
<dbReference type="InterPro" id="IPR002132">
    <property type="entry name" value="Ribosomal_uL5"/>
</dbReference>
<dbReference type="InterPro" id="IPR031309">
    <property type="entry name" value="Ribosomal_uL5_C"/>
</dbReference>
<dbReference type="InterPro" id="IPR022803">
    <property type="entry name" value="Ribosomal_uL5_dom_sf"/>
</dbReference>
<dbReference type="PANTHER" id="PTHR11994">
    <property type="entry name" value="60S RIBOSOMAL PROTEIN L11-RELATED"/>
    <property type="match status" value="1"/>
</dbReference>
<dbReference type="Pfam" id="PF00673">
    <property type="entry name" value="Ribosomal_L5_C"/>
    <property type="match status" value="1"/>
</dbReference>
<dbReference type="SUPFAM" id="SSF55282">
    <property type="entry name" value="RL5-like"/>
    <property type="match status" value="1"/>
</dbReference>
<feature type="chain" id="PRO_0000458606" description="Large ribosomal subunit protein uL5m">
    <location>
        <begin position="1"/>
        <end position="352"/>
    </location>
</feature>
<feature type="region of interest" description="Disordered" evidence="1">
    <location>
        <begin position="28"/>
        <end position="109"/>
    </location>
</feature>
<feature type="compositionally biased region" description="Basic and acidic residues" evidence="1">
    <location>
        <begin position="63"/>
        <end position="80"/>
    </location>
</feature>
<proteinExistence type="evidence at protein level"/>
<organism>
    <name type="scientific">Neurospora crassa (strain ATCC 24698 / 74-OR23-1A / CBS 708.71 / DSM 1257 / FGSC 987)</name>
    <dbReference type="NCBI Taxonomy" id="367110"/>
    <lineage>
        <taxon>Eukaryota</taxon>
        <taxon>Fungi</taxon>
        <taxon>Dikarya</taxon>
        <taxon>Ascomycota</taxon>
        <taxon>Pezizomycotina</taxon>
        <taxon>Sordariomycetes</taxon>
        <taxon>Sordariomycetidae</taxon>
        <taxon>Sordariales</taxon>
        <taxon>Sordariaceae</taxon>
        <taxon>Neurospora</taxon>
    </lineage>
</organism>
<keyword id="KW-0002">3D-structure</keyword>
<keyword id="KW-0496">Mitochondrion</keyword>
<keyword id="KW-1185">Reference proteome</keyword>
<keyword id="KW-0687">Ribonucleoprotein</keyword>
<keyword id="KW-0689">Ribosomal protein</keyword>
<accession>Q1K6P0</accession>
<gene>
    <name type="primary">mrpl7</name>
    <name type="ORF">NCU04171</name>
</gene>
<protein>
    <recommendedName>
        <fullName evidence="4">Large ribosomal subunit protein uL5m</fullName>
    </recommendedName>
</protein>
<sequence length="352" mass="39118">MASLRGVSRSARALQPFSAQFAVRRCASTQTGAGAAAATPKSNIPDLAELETRSALDAPIPSEEDKKEFRPWKRAADRKARLPSSRYQYHPPKYNRGPLHPIQSPPSSDPIARDFVPGPFNMPRLKETFRTVMASDLMTLAYIHTPPGTPKKEPTERLRAWEGDSPYFANRARRAPRGAPELPIRERDISFRNIPEIKEITVSTFVPLGLKNPDLLIVARAVLLAMTGTMPEMTRSKNNVVQWQLQANKPAGCKTTIYGNAAWEFMDRLIHLVLPRIKDWKGVPASTGDGSGNVQFGLNPEDVQLFPEVECNYDMYPAKMIPGCHIAIKTTATSDRQAKLLLQSLGVPFYSN</sequence>
<name>RM07_NEUCR</name>